<feature type="chain" id="PRO_0000382222" description="Histone-arginine methyltransferase CARMER">
    <location>
        <begin position="1"/>
        <end position="530"/>
    </location>
</feature>
<feature type="domain" description="SAM-dependent MTase PRMT-type" evidence="5">
    <location>
        <begin position="141"/>
        <end position="450"/>
    </location>
</feature>
<feature type="binding site" evidence="2">
    <location>
        <position position="154"/>
    </location>
    <ligand>
        <name>S-adenosyl-L-methionine</name>
        <dbReference type="ChEBI" id="CHEBI:59789"/>
    </ligand>
</feature>
<feature type="binding site" evidence="2">
    <location>
        <position position="163"/>
    </location>
    <ligand>
        <name>S-adenosyl-L-methionine</name>
        <dbReference type="ChEBI" id="CHEBI:59789"/>
    </ligand>
</feature>
<feature type="binding site" evidence="2">
    <location>
        <position position="187"/>
    </location>
    <ligand>
        <name>S-adenosyl-L-methionine</name>
        <dbReference type="ChEBI" id="CHEBI:59789"/>
    </ligand>
</feature>
<feature type="binding site" evidence="2">
    <location>
        <position position="209"/>
    </location>
    <ligand>
        <name>S-adenosyl-L-methionine</name>
        <dbReference type="ChEBI" id="CHEBI:59789"/>
    </ligand>
</feature>
<feature type="binding site" evidence="2">
    <location>
        <position position="238"/>
    </location>
    <ligand>
        <name>S-adenosyl-L-methionine</name>
        <dbReference type="ChEBI" id="CHEBI:59789"/>
    </ligand>
</feature>
<feature type="binding site" evidence="1">
    <location>
        <position position="266"/>
    </location>
    <ligand>
        <name>S-adenosyl-L-methionine</name>
        <dbReference type="ChEBI" id="CHEBI:59789"/>
    </ligand>
</feature>
<feature type="modified residue" description="Asymmetric dimethylarginine; by autocatalysis" evidence="3">
    <location>
        <position position="501"/>
    </location>
</feature>
<protein>
    <recommendedName>
        <fullName evidence="3">Histone-arginine methyltransferase CARMER</fullName>
        <ecNumber evidence="3">2.1.1.319</ecNumber>
    </recommendedName>
</protein>
<proteinExistence type="inferred from homology"/>
<gene>
    <name type="primary">Art4</name>
    <name type="ORF">GG17314</name>
</gene>
<sequence length="530" mass="59683">MSSLRPEEARKLATAASVSPLSNCQFSGVVISSIADEQKLEFTNKYKGSCTLLCSYDSQGVVLRVVSDDDRSHVLKEYMIAADTDAAQMGRRSYAVSLDADNLVLRFASDQDQQLFRKVVENVKHLRPKSVFSQRTEESSASQYFQFYGYLSQQQNMMQDYVRTSTYQRAILGNAVDFQDKIVLDVGAGSGILSFFAVQAGAAKVYAIEASNMAQYAQQLVESNNVQHKISVIPGKIEEIELPEKVDVIISEPMGYMLYNERMLETYLHARKWLKPQGKMYPTHGDLHIAPFSDESLYSEQYNKANFWYQSAFHGVDLTTLHKEGMKEYFRQPIVDTFDIRICMAKSVRHVCDFLNDKEDDLHLISIPLEFHILQTGICHGLAFWFDVEFSGSSQNVWLSTSPTAPLTHWYQVRCLLPMPIFIKQGQTLTGRVLLEANRRQSYDVTIDLHIEGTLISSSNTLDLKNPYFRYTGAPVQAPPGTSTQSPSEQYWTQVDTQGSRNSSSMLNGGLSVNGIGDGMDITHGLMHPH</sequence>
<name>CARM1_DROER</name>
<accession>B3P4N5</accession>
<comment type="function">
    <text evidence="3">Methylates (mono- and asymmetric dimethylation) the guanidino nitrogens of arginyl residues in proteins. May methylate histone H3 at 'Arg-17' and activate transcription via chromatin remodeling.</text>
</comment>
<comment type="catalytic activity">
    <reaction evidence="3">
        <text>L-arginyl-[protein] + 2 S-adenosyl-L-methionine = N(omega),N(omega)-dimethyl-L-arginyl-[protein] + 2 S-adenosyl-L-homocysteine + 2 H(+)</text>
        <dbReference type="Rhea" id="RHEA:48096"/>
        <dbReference type="Rhea" id="RHEA-COMP:10532"/>
        <dbReference type="Rhea" id="RHEA-COMP:11991"/>
        <dbReference type="ChEBI" id="CHEBI:15378"/>
        <dbReference type="ChEBI" id="CHEBI:29965"/>
        <dbReference type="ChEBI" id="CHEBI:57856"/>
        <dbReference type="ChEBI" id="CHEBI:59789"/>
        <dbReference type="ChEBI" id="CHEBI:61897"/>
        <dbReference type="EC" id="2.1.1.319"/>
    </reaction>
</comment>
<comment type="subunit">
    <text evidence="1">Homodimer.</text>
</comment>
<comment type="subcellular location">
    <subcellularLocation>
        <location evidence="4">Cytoplasm</location>
    </subcellularLocation>
    <subcellularLocation>
        <location evidence="4">Nucleus</location>
    </subcellularLocation>
</comment>
<comment type="PTM">
    <text evidence="1">The dimethylated protein is the major form.</text>
</comment>
<comment type="similarity">
    <text evidence="5">Belongs to the class I-like SAM-binding methyltransferase superfamily. Protein arginine N-methyltransferase family.</text>
</comment>
<evidence type="ECO:0000250" key="1"/>
<evidence type="ECO:0000250" key="2">
    <source>
        <dbReference type="UniProtKB" id="Q63009"/>
    </source>
</evidence>
<evidence type="ECO:0000250" key="3">
    <source>
        <dbReference type="UniProtKB" id="Q7Q2B7"/>
    </source>
</evidence>
<evidence type="ECO:0000250" key="4">
    <source>
        <dbReference type="UniProtKB" id="Q9VH48"/>
    </source>
</evidence>
<evidence type="ECO:0000255" key="5">
    <source>
        <dbReference type="PROSITE-ProRule" id="PRU01015"/>
    </source>
</evidence>
<evidence type="ECO:0000312" key="6">
    <source>
        <dbReference type="EMBL" id="EDV49688.1"/>
    </source>
</evidence>
<dbReference type="EC" id="2.1.1.319" evidence="3"/>
<dbReference type="EMBL" id="CH954181">
    <property type="protein sequence ID" value="EDV49688.1"/>
    <property type="molecule type" value="Genomic_DNA"/>
</dbReference>
<dbReference type="SMR" id="B3P4N5"/>
<dbReference type="EnsemblMetazoa" id="FBtr0137368">
    <property type="protein sequence ID" value="FBpp0135860"/>
    <property type="gene ID" value="FBgn0109541"/>
</dbReference>
<dbReference type="EnsemblMetazoa" id="XM_001980694.3">
    <property type="protein sequence ID" value="XP_001980730.1"/>
    <property type="gene ID" value="LOC6552211"/>
</dbReference>
<dbReference type="GeneID" id="6552211"/>
<dbReference type="KEGG" id="der:6552211"/>
<dbReference type="CTD" id="420"/>
<dbReference type="eggNOG" id="KOG1500">
    <property type="taxonomic scope" value="Eukaryota"/>
</dbReference>
<dbReference type="HOGENOM" id="CLU_017375_0_1_1"/>
<dbReference type="OMA" id="GIGDGMD"/>
<dbReference type="OrthoDB" id="7848332at2759"/>
<dbReference type="PhylomeDB" id="B3P4N5"/>
<dbReference type="Proteomes" id="UP000008711">
    <property type="component" value="Unassembled WGS sequence"/>
</dbReference>
<dbReference type="GO" id="GO:0005737">
    <property type="term" value="C:cytoplasm"/>
    <property type="evidence" value="ECO:0000250"/>
    <property type="project" value="UniProtKB"/>
</dbReference>
<dbReference type="GO" id="GO:0005829">
    <property type="term" value="C:cytosol"/>
    <property type="evidence" value="ECO:0007669"/>
    <property type="project" value="EnsemblMetazoa"/>
</dbReference>
<dbReference type="GO" id="GO:0035097">
    <property type="term" value="C:histone methyltransferase complex"/>
    <property type="evidence" value="ECO:0007669"/>
    <property type="project" value="EnsemblMetazoa"/>
</dbReference>
<dbReference type="GO" id="GO:0005634">
    <property type="term" value="C:nucleus"/>
    <property type="evidence" value="ECO:0000250"/>
    <property type="project" value="UniProtKB"/>
</dbReference>
<dbReference type="GO" id="GO:0035642">
    <property type="term" value="F:histone H3R17 methyltransferase activity"/>
    <property type="evidence" value="ECO:0000250"/>
    <property type="project" value="UniProtKB"/>
</dbReference>
<dbReference type="GO" id="GO:0070611">
    <property type="term" value="F:histone H3R2 methyltransferase activity"/>
    <property type="evidence" value="ECO:0000250"/>
    <property type="project" value="UniProtKB"/>
</dbReference>
<dbReference type="GO" id="GO:0140903">
    <property type="term" value="F:histone H3R26 methyltransferase activity"/>
    <property type="evidence" value="ECO:0000250"/>
    <property type="project" value="UniProtKB"/>
</dbReference>
<dbReference type="GO" id="GO:0035242">
    <property type="term" value="F:protein-arginine omega-N asymmetric methyltransferase activity"/>
    <property type="evidence" value="ECO:0000250"/>
    <property type="project" value="UniProtKB"/>
</dbReference>
<dbReference type="GO" id="GO:0035241">
    <property type="term" value="F:protein-arginine omega-N monomethyltransferase activity"/>
    <property type="evidence" value="ECO:0000250"/>
    <property type="project" value="UniProtKB"/>
</dbReference>
<dbReference type="GO" id="GO:0006338">
    <property type="term" value="P:chromatin remodeling"/>
    <property type="evidence" value="ECO:0000250"/>
    <property type="project" value="UniProtKB"/>
</dbReference>
<dbReference type="GO" id="GO:0019919">
    <property type="term" value="P:peptidyl-arginine methylation, to asymmetrical-dimethyl arginine"/>
    <property type="evidence" value="ECO:0000250"/>
    <property type="project" value="UniProtKB"/>
</dbReference>
<dbReference type="GO" id="GO:0120142">
    <property type="term" value="P:positive regulation of ecdysone receptor signaling pathway"/>
    <property type="evidence" value="ECO:0007669"/>
    <property type="project" value="EnsemblMetazoa"/>
</dbReference>
<dbReference type="GO" id="GO:0045944">
    <property type="term" value="P:positive regulation of transcription by RNA polymerase II"/>
    <property type="evidence" value="ECO:0007669"/>
    <property type="project" value="EnsemblMetazoa"/>
</dbReference>
<dbReference type="GO" id="GO:0006355">
    <property type="term" value="P:regulation of DNA-templated transcription"/>
    <property type="evidence" value="ECO:0000250"/>
    <property type="project" value="UniProtKB"/>
</dbReference>
<dbReference type="CDD" id="cd02440">
    <property type="entry name" value="AdoMet_MTases"/>
    <property type="match status" value="1"/>
</dbReference>
<dbReference type="FunFam" id="2.30.29.30:FF:000449">
    <property type="entry name" value="Histone-arginine methyltransferase CARMER"/>
    <property type="match status" value="1"/>
</dbReference>
<dbReference type="FunFam" id="2.70.160.11:FF:000002">
    <property type="entry name" value="Probable histone-arginine methyltransferase CARM1"/>
    <property type="match status" value="1"/>
</dbReference>
<dbReference type="FunFam" id="3.40.50.150:FF:000031">
    <property type="entry name" value="Putative Histone-arginine methyltransferase CARM1"/>
    <property type="match status" value="1"/>
</dbReference>
<dbReference type="Gene3D" id="2.70.160.11">
    <property type="entry name" value="Hnrnp arginine n-methyltransferase1"/>
    <property type="match status" value="1"/>
</dbReference>
<dbReference type="Gene3D" id="2.30.29.30">
    <property type="entry name" value="Pleckstrin-homology domain (PH domain)/Phosphotyrosine-binding domain (PTB)"/>
    <property type="match status" value="1"/>
</dbReference>
<dbReference type="Gene3D" id="3.40.50.150">
    <property type="entry name" value="Vaccinia Virus protein VP39"/>
    <property type="match status" value="1"/>
</dbReference>
<dbReference type="InterPro" id="IPR025799">
    <property type="entry name" value="Arg_MeTrfase"/>
</dbReference>
<dbReference type="InterPro" id="IPR011993">
    <property type="entry name" value="PH-like_dom_sf"/>
</dbReference>
<dbReference type="InterPro" id="IPR055135">
    <property type="entry name" value="PRMT_dom"/>
</dbReference>
<dbReference type="InterPro" id="IPR029063">
    <property type="entry name" value="SAM-dependent_MTases_sf"/>
</dbReference>
<dbReference type="PANTHER" id="PTHR11006:SF10">
    <property type="entry name" value="HISTONE-ARGININE METHYLTRANSFERASE CARMER-RELATED"/>
    <property type="match status" value="1"/>
</dbReference>
<dbReference type="PANTHER" id="PTHR11006">
    <property type="entry name" value="PROTEIN ARGININE N-METHYLTRANSFERASE"/>
    <property type="match status" value="1"/>
</dbReference>
<dbReference type="Pfam" id="PF06325">
    <property type="entry name" value="PrmA"/>
    <property type="match status" value="1"/>
</dbReference>
<dbReference type="Pfam" id="PF22528">
    <property type="entry name" value="PRMT_C"/>
    <property type="match status" value="1"/>
</dbReference>
<dbReference type="SUPFAM" id="SSF53335">
    <property type="entry name" value="S-adenosyl-L-methionine-dependent methyltransferases"/>
    <property type="match status" value="1"/>
</dbReference>
<dbReference type="PROSITE" id="PS51678">
    <property type="entry name" value="SAM_MT_PRMT"/>
    <property type="match status" value="1"/>
</dbReference>
<reference evidence="6" key="1">
    <citation type="journal article" date="2007" name="Nature">
        <title>Evolution of genes and genomes on the Drosophila phylogeny.</title>
        <authorList>
            <consortium name="Drosophila 12 genomes consortium"/>
        </authorList>
    </citation>
    <scope>NUCLEOTIDE SEQUENCE [LARGE SCALE GENOMIC DNA]</scope>
    <source>
        <strain evidence="6">Tucson 14021-0224.01</strain>
    </source>
</reference>
<organism>
    <name type="scientific">Drosophila erecta</name>
    <name type="common">Fruit fly</name>
    <dbReference type="NCBI Taxonomy" id="7220"/>
    <lineage>
        <taxon>Eukaryota</taxon>
        <taxon>Metazoa</taxon>
        <taxon>Ecdysozoa</taxon>
        <taxon>Arthropoda</taxon>
        <taxon>Hexapoda</taxon>
        <taxon>Insecta</taxon>
        <taxon>Pterygota</taxon>
        <taxon>Neoptera</taxon>
        <taxon>Endopterygota</taxon>
        <taxon>Diptera</taxon>
        <taxon>Brachycera</taxon>
        <taxon>Muscomorpha</taxon>
        <taxon>Ephydroidea</taxon>
        <taxon>Drosophilidae</taxon>
        <taxon>Drosophila</taxon>
        <taxon>Sophophora</taxon>
    </lineage>
</organism>
<keyword id="KW-0156">Chromatin regulator</keyword>
<keyword id="KW-0963">Cytoplasm</keyword>
<keyword id="KW-0488">Methylation</keyword>
<keyword id="KW-0489">Methyltransferase</keyword>
<keyword id="KW-0539">Nucleus</keyword>
<keyword id="KW-0949">S-adenosyl-L-methionine</keyword>
<keyword id="KW-0804">Transcription</keyword>
<keyword id="KW-0805">Transcription regulation</keyword>
<keyword id="KW-0808">Transferase</keyword>